<feature type="chain" id="PRO_0000297694" description="Cytochrome b6">
    <location>
        <begin position="1"/>
        <end position="215"/>
    </location>
</feature>
<feature type="transmembrane region" description="Helical" evidence="1">
    <location>
        <begin position="32"/>
        <end position="52"/>
    </location>
</feature>
<feature type="transmembrane region" description="Helical" evidence="1">
    <location>
        <begin position="90"/>
        <end position="110"/>
    </location>
</feature>
<feature type="transmembrane region" description="Helical" evidence="1">
    <location>
        <begin position="116"/>
        <end position="136"/>
    </location>
</feature>
<feature type="transmembrane region" description="Helical" evidence="1">
    <location>
        <begin position="186"/>
        <end position="206"/>
    </location>
</feature>
<feature type="binding site" description="covalent" evidence="1">
    <location>
        <position position="35"/>
    </location>
    <ligand>
        <name>heme c</name>
        <dbReference type="ChEBI" id="CHEBI:61717"/>
    </ligand>
</feature>
<feature type="binding site" description="axial binding residue" evidence="1">
    <location>
        <position position="86"/>
    </location>
    <ligand>
        <name>heme b</name>
        <dbReference type="ChEBI" id="CHEBI:60344"/>
        <label>2</label>
    </ligand>
    <ligandPart>
        <name>Fe</name>
        <dbReference type="ChEBI" id="CHEBI:18248"/>
    </ligandPart>
</feature>
<feature type="binding site" description="axial binding residue" evidence="1">
    <location>
        <position position="100"/>
    </location>
    <ligand>
        <name>heme b</name>
        <dbReference type="ChEBI" id="CHEBI:60344"/>
        <label>1</label>
    </ligand>
    <ligandPart>
        <name>Fe</name>
        <dbReference type="ChEBI" id="CHEBI:18248"/>
    </ligandPart>
</feature>
<feature type="binding site" description="axial binding residue" evidence="1">
    <location>
        <position position="187"/>
    </location>
    <ligand>
        <name>heme b</name>
        <dbReference type="ChEBI" id="CHEBI:60344"/>
        <label>2</label>
    </ligand>
    <ligandPart>
        <name>Fe</name>
        <dbReference type="ChEBI" id="CHEBI:18248"/>
    </ligandPart>
</feature>
<feature type="binding site" description="axial binding residue" evidence="1">
    <location>
        <position position="202"/>
    </location>
    <ligand>
        <name>heme b</name>
        <dbReference type="ChEBI" id="CHEBI:60344"/>
        <label>1</label>
    </ligand>
    <ligandPart>
        <name>Fe</name>
        <dbReference type="ChEBI" id="CHEBI:18248"/>
    </ligandPart>
</feature>
<feature type="splice variant" id="VSP_027360" description="In isoform 2." evidence="2">
    <original>MS</original>
    <variation>MSMKFSYTVLGGGVGLVTYLN</variation>
    <location>
        <begin position="1"/>
        <end position="2"/>
    </location>
</feature>
<evidence type="ECO:0000255" key="1">
    <source>
        <dbReference type="HAMAP-Rule" id="MF_00633"/>
    </source>
</evidence>
<evidence type="ECO:0000305" key="2"/>
<dbReference type="EMBL" id="AE009947">
    <property type="protein sequence ID" value="AAT44721.1"/>
    <property type="status" value="ALT_SEQ"/>
    <property type="molecule type" value="Genomic_DNA"/>
</dbReference>
<dbReference type="SMR" id="Q6L372"/>
<dbReference type="GO" id="GO:0009535">
    <property type="term" value="C:chloroplast thylakoid membrane"/>
    <property type="evidence" value="ECO:0007669"/>
    <property type="project" value="UniProtKB-SubCell"/>
</dbReference>
<dbReference type="GO" id="GO:0045158">
    <property type="term" value="F:electron transporter, transferring electrons within cytochrome b6/f complex of photosystem II activity"/>
    <property type="evidence" value="ECO:0007669"/>
    <property type="project" value="UniProtKB-UniRule"/>
</dbReference>
<dbReference type="GO" id="GO:0046872">
    <property type="term" value="F:metal ion binding"/>
    <property type="evidence" value="ECO:0007669"/>
    <property type="project" value="UniProtKB-KW"/>
</dbReference>
<dbReference type="GO" id="GO:0016491">
    <property type="term" value="F:oxidoreductase activity"/>
    <property type="evidence" value="ECO:0007669"/>
    <property type="project" value="InterPro"/>
</dbReference>
<dbReference type="GO" id="GO:0015979">
    <property type="term" value="P:photosynthesis"/>
    <property type="evidence" value="ECO:0007669"/>
    <property type="project" value="UniProtKB-UniRule"/>
</dbReference>
<dbReference type="GO" id="GO:0022904">
    <property type="term" value="P:respiratory electron transport chain"/>
    <property type="evidence" value="ECO:0007669"/>
    <property type="project" value="InterPro"/>
</dbReference>
<dbReference type="CDD" id="cd00284">
    <property type="entry name" value="Cytochrome_b_N"/>
    <property type="match status" value="1"/>
</dbReference>
<dbReference type="FunFam" id="1.20.810.10:FF:000001">
    <property type="entry name" value="Cytochrome b6"/>
    <property type="match status" value="1"/>
</dbReference>
<dbReference type="Gene3D" id="1.20.810.10">
    <property type="entry name" value="Cytochrome Bc1 Complex, Chain C"/>
    <property type="match status" value="1"/>
</dbReference>
<dbReference type="HAMAP" id="MF_00633">
    <property type="entry name" value="Cytb6_f_cytb6"/>
    <property type="match status" value="1"/>
</dbReference>
<dbReference type="InterPro" id="IPR005797">
    <property type="entry name" value="Cyt_b/b6_N"/>
</dbReference>
<dbReference type="InterPro" id="IPR023530">
    <property type="entry name" value="Cyt_B6_PetB"/>
</dbReference>
<dbReference type="InterPro" id="IPR027387">
    <property type="entry name" value="Cytb/b6-like_sf"/>
</dbReference>
<dbReference type="InterPro" id="IPR048259">
    <property type="entry name" value="Cytochrome_b_N_euk/bac"/>
</dbReference>
<dbReference type="InterPro" id="IPR016174">
    <property type="entry name" value="Di-haem_cyt_TM"/>
</dbReference>
<dbReference type="NCBIfam" id="NF002990">
    <property type="entry name" value="PRK03735.1"/>
    <property type="match status" value="1"/>
</dbReference>
<dbReference type="PANTHER" id="PTHR19271">
    <property type="entry name" value="CYTOCHROME B"/>
    <property type="match status" value="1"/>
</dbReference>
<dbReference type="PANTHER" id="PTHR19271:SF16">
    <property type="entry name" value="CYTOCHROME B"/>
    <property type="match status" value="1"/>
</dbReference>
<dbReference type="Pfam" id="PF00033">
    <property type="entry name" value="Cytochrome_B"/>
    <property type="match status" value="1"/>
</dbReference>
<dbReference type="PIRSF" id="PIRSF000032">
    <property type="entry name" value="Cytochrome_b6"/>
    <property type="match status" value="1"/>
</dbReference>
<dbReference type="SUPFAM" id="SSF81342">
    <property type="entry name" value="Transmembrane di-heme cytochromes"/>
    <property type="match status" value="1"/>
</dbReference>
<dbReference type="PROSITE" id="PS51002">
    <property type="entry name" value="CYTB_NTER"/>
    <property type="match status" value="1"/>
</dbReference>
<gene>
    <name evidence="1" type="primary">petB</name>
    <name type="ordered locus">PS155</name>
</gene>
<comment type="function">
    <text evidence="1">Component of the cytochrome b6-f complex, which mediates electron transfer between photosystem II (PSII) and photosystem I (PSI), cyclic electron flow around PSI, and state transitions.</text>
</comment>
<comment type="cofactor">
    <cofactor evidence="1">
        <name>heme b</name>
        <dbReference type="ChEBI" id="CHEBI:60344"/>
    </cofactor>
    <text evidence="1">Binds 2 heme b groups non-covalently with two histidine residues as axial ligands.</text>
</comment>
<comment type="cofactor">
    <cofactor evidence="1">
        <name>heme c</name>
        <dbReference type="ChEBI" id="CHEBI:61717"/>
    </cofactor>
    <text evidence="1">Binds one heme group covalently by a single cysteine link with no axial amino acid ligand. This heme was named heme ci.</text>
</comment>
<comment type="subunit">
    <text evidence="1">The 4 large subunits of the cytochrome b6-f complex are cytochrome b6, subunit IV (17 kDa polypeptide, PetD), cytochrome f and the Rieske protein, while the 4 small subunits are PetG, PetL, PetM and PetN. The complex functions as a dimer.</text>
</comment>
<comment type="subcellular location">
    <subcellularLocation>
        <location evidence="1">Plastid</location>
        <location evidence="1">Chloroplast thylakoid membrane</location>
        <topology evidence="1">Multi-pass membrane protein</topology>
    </subcellularLocation>
</comment>
<comment type="alternative products">
    <event type="alternative splicing"/>
    <isoform>
        <id>Q6L372-1</id>
        <name>1</name>
        <sequence type="displayed"/>
    </isoform>
    <isoform>
        <id>Q6L372-2</id>
        <name>2</name>
        <sequence type="described" ref="VSP_027360"/>
    </isoform>
</comment>
<comment type="miscellaneous">
    <text evidence="1">Heme 1 (or BH or b566) is high-potential and absorbs at about 566 nm, and heme 2 (or BL or b562) is low-potential and absorbs at about 562 nm.</text>
</comment>
<comment type="miscellaneous">
    <molecule>Isoform 1</molecule>
    <text>Inferred from barley, maize and rice transcripts.</text>
</comment>
<comment type="miscellaneous">
    <molecule>Isoform 2</molecule>
    <text evidence="2">Unspliced sequence.</text>
</comment>
<comment type="similarity">
    <text evidence="1">Belongs to the cytochrome b family. PetB subfamily.</text>
</comment>
<reference key="1">
    <citation type="journal article" date="2004" name="Curr. Genet.">
        <title>Structural features and transcript-editing analysis of sugarcane (Saccharum officinarum L.) chloroplast genome.</title>
        <authorList>
            <person name="Calsa T. Jr."/>
            <person name="Carraro D.M."/>
            <person name="Benatti M.R."/>
            <person name="Barbosa A.C."/>
            <person name="Kitajima J.P."/>
            <person name="Carrer H."/>
        </authorList>
    </citation>
    <scope>NUCLEOTIDE SEQUENCE [LARGE SCALE GENOMIC DNA]</scope>
    <source>
        <strain>cv. SP-80-3280</strain>
    </source>
</reference>
<sequence>MSKVYDWFEERLEIQAIADDITSKYVPPHVNIFYCLGGITLTCFLVQVATGFAMTFYYRPTVTEAFSSVQYIMTEANFGWLIRSVHRWSASMMVLMMILHVFRVYLTGGFKKPRELTWVTGVVLAVLTASFGVTGYSLPWDQIGYWAVKIVTGVPEAIPVIGSPLVELLRGSASVGQSTLTRFYSLHTFVLPLLTAVFMLMHFPMIRKQGISGPL</sequence>
<accession>Q6L372</accession>
<geneLocation type="chloroplast"/>
<keyword id="KW-0025">Alternative splicing</keyword>
<keyword id="KW-0150">Chloroplast</keyword>
<keyword id="KW-0249">Electron transport</keyword>
<keyword id="KW-0349">Heme</keyword>
<keyword id="KW-0408">Iron</keyword>
<keyword id="KW-0472">Membrane</keyword>
<keyword id="KW-0479">Metal-binding</keyword>
<keyword id="KW-0602">Photosynthesis</keyword>
<keyword id="KW-0934">Plastid</keyword>
<keyword id="KW-0793">Thylakoid</keyword>
<keyword id="KW-0812">Transmembrane</keyword>
<keyword id="KW-1133">Transmembrane helix</keyword>
<keyword id="KW-0813">Transport</keyword>
<protein>
    <recommendedName>
        <fullName evidence="1">Cytochrome b6</fullName>
    </recommendedName>
</protein>
<proteinExistence type="inferred from homology"/>
<name>CYB6_SACHY</name>
<organism>
    <name type="scientific">Saccharum hybrid</name>
    <name type="common">Sugarcane</name>
    <dbReference type="NCBI Taxonomy" id="15819"/>
    <lineage>
        <taxon>Eukaryota</taxon>
        <taxon>Viridiplantae</taxon>
        <taxon>Streptophyta</taxon>
        <taxon>Embryophyta</taxon>
        <taxon>Tracheophyta</taxon>
        <taxon>Spermatophyta</taxon>
        <taxon>Magnoliopsida</taxon>
        <taxon>Liliopsida</taxon>
        <taxon>Poales</taxon>
        <taxon>Poaceae</taxon>
        <taxon>PACMAD clade</taxon>
        <taxon>Panicoideae</taxon>
        <taxon>Andropogonodae</taxon>
        <taxon>Andropogoneae</taxon>
        <taxon>Saccharinae</taxon>
        <taxon>Saccharum</taxon>
    </lineage>
</organism>